<accession>A0JP85</accession>
<keyword id="KW-0963">Cytoplasm</keyword>
<keyword id="KW-0539">Nucleus</keyword>
<keyword id="KW-1185">Reference proteome</keyword>
<keyword id="KW-0678">Repressor</keyword>
<keyword id="KW-0943">RNA-mediated gene silencing</keyword>
<keyword id="KW-0804">Transcription</keyword>
<keyword id="KW-0805">Transcription regulation</keyword>
<keyword id="KW-0810">Translation regulation</keyword>
<name>CNOT1_XENTR</name>
<protein>
    <recommendedName>
        <fullName>CCR4-NOT transcription complex subunit 1</fullName>
    </recommendedName>
    <alternativeName>
        <fullName>CCR4-associated factor 1</fullName>
    </alternativeName>
</protein>
<reference key="1">
    <citation type="submission" date="2006-11" db="EMBL/GenBank/DDBJ databases">
        <authorList>
            <consortium name="NIH - Xenopus Gene Collection (XGC) project"/>
        </authorList>
    </citation>
    <scope>NUCLEOTIDE SEQUENCE [LARGE SCALE MRNA]</scope>
    <source>
        <tissue>Brain</tissue>
    </source>
</reference>
<organism>
    <name type="scientific">Xenopus tropicalis</name>
    <name type="common">Western clawed frog</name>
    <name type="synonym">Silurana tropicalis</name>
    <dbReference type="NCBI Taxonomy" id="8364"/>
    <lineage>
        <taxon>Eukaryota</taxon>
        <taxon>Metazoa</taxon>
        <taxon>Chordata</taxon>
        <taxon>Craniata</taxon>
        <taxon>Vertebrata</taxon>
        <taxon>Euteleostomi</taxon>
        <taxon>Amphibia</taxon>
        <taxon>Batrachia</taxon>
        <taxon>Anura</taxon>
        <taxon>Pipoidea</taxon>
        <taxon>Pipidae</taxon>
        <taxon>Xenopodinae</taxon>
        <taxon>Xenopus</taxon>
        <taxon>Silurana</taxon>
    </lineage>
</organism>
<gene>
    <name type="primary">cnot1</name>
</gene>
<dbReference type="EMBL" id="BC127296">
    <property type="protein sequence ID" value="AAI27297.1"/>
    <property type="molecule type" value="mRNA"/>
</dbReference>
<dbReference type="RefSeq" id="NP_001090658.1">
    <property type="nucleotide sequence ID" value="NM_001097189.1"/>
</dbReference>
<dbReference type="SMR" id="A0JP85"/>
<dbReference type="FunCoup" id="A0JP85">
    <property type="interactions" value="3155"/>
</dbReference>
<dbReference type="STRING" id="8364.ENSXETP00000002510"/>
<dbReference type="PaxDb" id="8364-ENSXETP00000034721"/>
<dbReference type="DNASU" id="100036630"/>
<dbReference type="GeneID" id="100036630"/>
<dbReference type="KEGG" id="xtr:100036630"/>
<dbReference type="AGR" id="Xenbase:XB-GENE-1032888"/>
<dbReference type="CTD" id="23019"/>
<dbReference type="Xenbase" id="XB-GENE-1032888">
    <property type="gene designation" value="cnot1"/>
</dbReference>
<dbReference type="eggNOG" id="KOG1831">
    <property type="taxonomic scope" value="Eukaryota"/>
</dbReference>
<dbReference type="InParanoid" id="A0JP85"/>
<dbReference type="OMA" id="IDEYHCY"/>
<dbReference type="OrthoDB" id="1933107at2759"/>
<dbReference type="Reactome" id="R-XTR-429947">
    <property type="pathway name" value="Deadenylation of mRNA"/>
</dbReference>
<dbReference type="Reactome" id="R-XTR-6804115">
    <property type="pathway name" value="TP53 regulates transcription of additional cell cycle genes whose exact role in the p53 pathway remain uncertain"/>
</dbReference>
<dbReference type="Proteomes" id="UP000008143">
    <property type="component" value="Chromosome 4"/>
</dbReference>
<dbReference type="GO" id="GO:0030014">
    <property type="term" value="C:CCR4-NOT complex"/>
    <property type="evidence" value="ECO:0000250"/>
    <property type="project" value="UniProtKB"/>
</dbReference>
<dbReference type="GO" id="GO:0030015">
    <property type="term" value="C:CCR4-NOT core complex"/>
    <property type="evidence" value="ECO:0007669"/>
    <property type="project" value="InterPro"/>
</dbReference>
<dbReference type="GO" id="GO:0005634">
    <property type="term" value="C:nucleus"/>
    <property type="evidence" value="ECO:0007669"/>
    <property type="project" value="UniProtKB-SubCell"/>
</dbReference>
<dbReference type="GO" id="GO:0000932">
    <property type="term" value="C:P-body"/>
    <property type="evidence" value="ECO:0000250"/>
    <property type="project" value="UniProtKB"/>
</dbReference>
<dbReference type="GO" id="GO:0030331">
    <property type="term" value="F:nuclear estrogen receptor binding"/>
    <property type="evidence" value="ECO:0000250"/>
    <property type="project" value="UniProtKB"/>
</dbReference>
<dbReference type="GO" id="GO:0042974">
    <property type="term" value="F:nuclear retinoic acid receptor binding"/>
    <property type="evidence" value="ECO:0000250"/>
    <property type="project" value="UniProtKB"/>
</dbReference>
<dbReference type="GO" id="GO:0033147">
    <property type="term" value="P:negative regulation of intracellular estrogen receptor signaling pathway"/>
    <property type="evidence" value="ECO:0000250"/>
    <property type="project" value="UniProtKB"/>
</dbReference>
<dbReference type="GO" id="GO:0048387">
    <property type="term" value="P:negative regulation of retinoic acid receptor signaling pathway"/>
    <property type="evidence" value="ECO:0000250"/>
    <property type="project" value="UniProtKB"/>
</dbReference>
<dbReference type="GO" id="GO:0000122">
    <property type="term" value="P:negative regulation of transcription by RNA polymerase II"/>
    <property type="evidence" value="ECO:0000250"/>
    <property type="project" value="UniProtKB"/>
</dbReference>
<dbReference type="GO" id="GO:0017148">
    <property type="term" value="P:negative regulation of translation"/>
    <property type="evidence" value="ECO:0007669"/>
    <property type="project" value="InterPro"/>
</dbReference>
<dbReference type="GO" id="GO:0010606">
    <property type="term" value="P:positive regulation of cytoplasmic mRNA processing body assembly"/>
    <property type="evidence" value="ECO:0000250"/>
    <property type="project" value="UniProtKB"/>
</dbReference>
<dbReference type="GO" id="GO:1900153">
    <property type="term" value="P:positive regulation of nuclear-transcribed mRNA catabolic process, deadenylation-dependent decay"/>
    <property type="evidence" value="ECO:0000250"/>
    <property type="project" value="UniProtKB"/>
</dbReference>
<dbReference type="GO" id="GO:0060213">
    <property type="term" value="P:positive regulation of nuclear-transcribed mRNA poly(A) tail shortening"/>
    <property type="evidence" value="ECO:0000250"/>
    <property type="project" value="UniProtKB"/>
</dbReference>
<dbReference type="GO" id="GO:0031047">
    <property type="term" value="P:regulatory ncRNA-mediated gene silencing"/>
    <property type="evidence" value="ECO:0007669"/>
    <property type="project" value="UniProtKB-KW"/>
</dbReference>
<dbReference type="CDD" id="cd20710">
    <property type="entry name" value="NOT1_connector"/>
    <property type="match status" value="1"/>
</dbReference>
<dbReference type="FunFam" id="1.25.40.800:FF:000001">
    <property type="entry name" value="CCR4-NOT transcription complex subunit 1"/>
    <property type="match status" value="1"/>
</dbReference>
<dbReference type="FunFam" id="1.25.40.180:FF:000005">
    <property type="entry name" value="Ccr4-not transcription complex subunit 1 isoform"/>
    <property type="match status" value="1"/>
</dbReference>
<dbReference type="FunFam" id="1.25.40.790:FF:000001">
    <property type="entry name" value="Ccr4-not transcription complex subunit 1 isoform"/>
    <property type="match status" value="1"/>
</dbReference>
<dbReference type="FunFam" id="1.25.40.840:FF:000001">
    <property type="entry name" value="Ccr4-not transcription complex subunit 1 isoform"/>
    <property type="match status" value="1"/>
</dbReference>
<dbReference type="Gene3D" id="1.25.40.180">
    <property type="match status" value="1"/>
</dbReference>
<dbReference type="Gene3D" id="1.25.40.790">
    <property type="match status" value="1"/>
</dbReference>
<dbReference type="Gene3D" id="1.25.40.800">
    <property type="match status" value="1"/>
</dbReference>
<dbReference type="Gene3D" id="1.25.40.840">
    <property type="entry name" value="CCR4-NOT transcription complex subunit 1 TTP binding domain"/>
    <property type="match status" value="1"/>
</dbReference>
<dbReference type="InterPro" id="IPR007196">
    <property type="entry name" value="CCR4-Not_Not1_C"/>
</dbReference>
<dbReference type="InterPro" id="IPR055454">
    <property type="entry name" value="CNOT1-like_NOT1_connector"/>
</dbReference>
<dbReference type="InterPro" id="IPR055104">
    <property type="entry name" value="CNOT1_1st"/>
</dbReference>
<dbReference type="InterPro" id="IPR032191">
    <property type="entry name" value="CNOT1_CAF1_bind"/>
</dbReference>
<dbReference type="InterPro" id="IPR024557">
    <property type="entry name" value="CNOT1_dom_4"/>
</dbReference>
<dbReference type="InterPro" id="IPR032194">
    <property type="entry name" value="CNOT1_HEAT"/>
</dbReference>
<dbReference type="InterPro" id="IPR032193">
    <property type="entry name" value="CNOT1_TTP_bind"/>
</dbReference>
<dbReference type="InterPro" id="IPR038535">
    <property type="entry name" value="CNOT1_TTP_bind_sf"/>
</dbReference>
<dbReference type="InterPro" id="IPR040398">
    <property type="entry name" value="Not1"/>
</dbReference>
<dbReference type="PANTHER" id="PTHR13162">
    <property type="entry name" value="CCR4-NOT TRANSCRIPTION COMPLEX"/>
    <property type="match status" value="1"/>
</dbReference>
<dbReference type="PANTHER" id="PTHR13162:SF8">
    <property type="entry name" value="CCR4-NOT TRANSCRIPTION COMPLEX SUBUNIT 1"/>
    <property type="match status" value="1"/>
</dbReference>
<dbReference type="Pfam" id="PF22940">
    <property type="entry name" value="CNOT1_1st"/>
    <property type="match status" value="1"/>
</dbReference>
<dbReference type="Pfam" id="PF16415">
    <property type="entry name" value="CNOT1_CAF1_bind"/>
    <property type="match status" value="1"/>
</dbReference>
<dbReference type="Pfam" id="PF16418">
    <property type="entry name" value="CNOT1_HEAT"/>
    <property type="match status" value="1"/>
</dbReference>
<dbReference type="Pfam" id="PF16417">
    <property type="entry name" value="CNOT1_TTP_bind"/>
    <property type="match status" value="1"/>
</dbReference>
<dbReference type="Pfam" id="PF12842">
    <property type="entry name" value="DUF3819"/>
    <property type="match status" value="1"/>
</dbReference>
<dbReference type="Pfam" id="PF04054">
    <property type="entry name" value="Not1"/>
    <property type="match status" value="1"/>
</dbReference>
<dbReference type="Pfam" id="PF23590">
    <property type="entry name" value="NOT1_connector"/>
    <property type="match status" value="1"/>
</dbReference>
<proteinExistence type="evidence at transcript level"/>
<feature type="chain" id="PRO_0000315544" description="CCR4-NOT transcription complex subunit 1">
    <location>
        <begin position="1"/>
        <end position="2388"/>
    </location>
</feature>
<feature type="region of interest" description="Disordered" evidence="2">
    <location>
        <begin position="1012"/>
        <end position="1035"/>
    </location>
</feature>
<feature type="region of interest" description="Interaction with CCR4-NOT complex catalytic subunits" evidence="1">
    <location>
        <begin position="1076"/>
        <end position="1617"/>
    </location>
</feature>
<feature type="region of interest" description="Disordered" evidence="2">
    <location>
        <begin position="1300"/>
        <end position="1320"/>
    </location>
</feature>
<feature type="short sequence motif" description="LXXLL">
    <location>
        <begin position="153"/>
        <end position="157"/>
    </location>
</feature>
<feature type="short sequence motif" description="LXXLL">
    <location>
        <begin position="181"/>
        <end position="185"/>
    </location>
</feature>
<feature type="short sequence motif" description="LXXLL">
    <location>
        <begin position="223"/>
        <end position="227"/>
    </location>
</feature>
<feature type="short sequence motif" description="LXXLL">
    <location>
        <begin position="570"/>
        <end position="574"/>
    </location>
</feature>
<feature type="short sequence motif" description="LXXLL">
    <location>
        <begin position="1651"/>
        <end position="1655"/>
    </location>
</feature>
<feature type="short sequence motif" description="LXXLL">
    <location>
        <begin position="1954"/>
        <end position="1958"/>
    </location>
</feature>
<feature type="short sequence motif" description="LXXLL">
    <location>
        <begin position="2108"/>
        <end position="2112"/>
    </location>
</feature>
<feature type="compositionally biased region" description="Low complexity" evidence="2">
    <location>
        <begin position="1016"/>
        <end position="1035"/>
    </location>
</feature>
<feature type="compositionally biased region" description="Basic and acidic residues" evidence="2">
    <location>
        <begin position="1300"/>
        <end position="1313"/>
    </location>
</feature>
<evidence type="ECO:0000250" key="1"/>
<evidence type="ECO:0000256" key="2">
    <source>
        <dbReference type="SAM" id="MobiDB-lite"/>
    </source>
</evidence>
<evidence type="ECO:0000305" key="3"/>
<comment type="function">
    <text evidence="1">Scaffolding component of the CCR4-NOT complex which is one of the major cellular mRNA deadenylases and is linked to various cellular processes including bulk mRNA degradation, miRNA-mediated repression, translational repression during translational initiation and general transcription regulation. Additional complex functions may be a consequence of its influence on mRNA expression. Its scaffolding function implies its interaction with the catalytic complex module and diverse RNA-binding proteins mediating the complex recruitment to selected mRNA 3'UTRs. Acts as a transcriptional repressor. Represses the ligand-dependent transcriptional activation by nuclear receptors (By similarity).</text>
</comment>
<comment type="subunit">
    <text evidence="1">Component of the CCR4-NOT complex.</text>
</comment>
<comment type="subcellular location">
    <subcellularLocation>
        <location evidence="1">Cytoplasm</location>
    </subcellularLocation>
    <subcellularLocation>
        <location evidence="1">Nucleus</location>
    </subcellularLocation>
</comment>
<comment type="domain">
    <text evidence="1">Contains Leu-Xaa-Xaa-Leu-Leu (LXXLL) motifs, a motif known to be important for the association with nuclear receptors.</text>
</comment>
<comment type="similarity">
    <text evidence="3">Belongs to the CNOT1 family.</text>
</comment>
<sequence length="2388" mass="268153">MNLDSLSLALSQISYLVDNLTKKNYRASQLEIQHIVNRHGPEADRHLLRCLFSHVDFSGDGKSSGKDFHQTQFLIQECASLITKPNFISTLSYAIDNPLHYQKSLKPSPHLFAQLSKVLKLSKVQEVIFGLALLNSSSCELRGFAAQFVKQKLPDLLRSYVDVDVSGSQEGGFQDIAIEVLHLLLSNLLFGQKGAFGVGQEQIVAFLKTLRRDFPQERCPVVLAPLLYPEKRDILMDRILADSGGITKTMMDSSLADFMQEVGYSFCASVEECRNVIVQFGVREVTAVQVARVLGMMARTHSGLTDGIPLQSITSPGSGIWSDGKDKNDAVQPHTWNVEVLIDVVKELNPTLNFKEVTYELDNPSFQIRDSKGLQTVVYGIQRGLGIEAFPVDLVYRPWKNAEGQLSFIQHSLVNPDVFCFADYACHAVATDILKAPPEDDNREIATWKSLDLIESLLRLAELGQYEQVKQLFAYPIKHCPDMLVLALLQINTTWHTLRHELISTLMPIFLGNHPNSAIILHYAWHGQGQSPSIRQLIMHAMAEWYMRGEQYDQARLSRILDVAQDLKALSMLLNGTPFAFVIDLAALASRREYLKLDKWLTDKIREHGEPFIQACMTFLKRRCPSILGGLAPEKDQPKSAQLPPETLATMLACLQACAGSVSQELSETILTMVANCSNVVNKARQPPPGVMPKGRPPSTSSLDAISPVQIDPIAAMASLSIGGSAAPHTQSMPVFPPNLGSAFSTPQSPAKAFPPLTAPNQSTAFSGLGGLTSQLPGGLGTGSLTGMGTGGLSLPTVNSDPFGQRKLSTSGLNQPTFQQTDLSQVWPEANQHFSKEIDDEANSYFQRIYNQPPHPTMSVDEVLEMLQRFKDSNIKREREVFNCMLRNLFEEYRFFPQYPDKELHITACLFGGIIEKGLVTYMALGLALRYVLEALRKPYQSKMYFFGIAALDRFKNRLKDYPQYCQHLASISHFMQFPHHLQEYIEYGQQSRDPPVKMQGSITTPGSIALSQAQTPAKPASSSAVTTPTTTTPAKTITITRPTGVSFKKDVPPSINTTNIDTLLVATDLAGQIVEPPENVQEKIAFIFNNLSQSNMTQKVEELKETVKDDYMPWVSQYLVMKRVSIELNFHSLYSNFLDALKHLEFNKMVLAETYRNIKVLLTSDKAAANFSDRSLLKNLGHWLGMITLAKNKPILHTDLDLKSLLLEAYVKGQQELLYVVPFVAKVLESSVRSVVFRPPNPWTMAIMNVLAELHQEHDLKLNLKFEIEVLCKNLVLDINDLKPGTLLKDKDRLKSLDEQLSAPKKDVKQPEELPPMTSASEYAIRTAGKLWASVEKQESDAVFTATATAPPPSTTCTTTVPPQPQYSYHDIHVYSLAGLAPHITLNPTIPLFQAHPQLKQCVRQAIERAVQELVHPVVDRSIKIAMTTCEQIVRKDFALDSEESRMRIAAHHMMRNLTAGMAMITCREPLLMSIATNLKNSFATAMRAASPQQREMMEQAAAQLAQDNCELACCFIQKTAVEKAGPEMDKRPATEFELRKHARQEGRRYCDPVVLTYQAERMPEQIRLKVGGVDPKQLAVYEEFARNVPGFLPTNDLTQPTGFLAQPMKQQAWATDDVAQIYDKCITELEQHLHAIPPALSMNPQSQALRSLLEAVAVARNSRDAIAALGLLQKAVEGLLDATSGADADLLLRYRECHLLVLKALQDGRAYGSPWCNKQITRCLIECRDEYKYNVEAVELLIRNHLVNMQQYDLHLAQSMENGLNYMAVAFAMQLVKILLVDERSVSHVTEAEFFHTIETLMRINAHSRGNAPEGLPQLMDVLRSNFDAMMERAHGGPNFMMHSGISQASEYDDPPGLREKAEYLLREWVNLYHSAAAGRDSTKAFSAFVGQMHQQGILKTDDLITRFFRLCTEMCVEISYRAQAEQQHNPAANPTMIRAKCYHNLDAFVRLIALLVKHSGEATNTVTKINLLNKVLGIVVGVLLQDHEVRQSEFQQLPYHRIFIMLLLELNAPEHVLETINFQTLTAFCNTFHILRPTKAPGFVYAWLELISHRIFIARMLAHTPQQKGWPMYAQLLIDLFKYLAPFLRNVELTKPMQILYKGTLRVLLVLLHDFPEFLCDYHYGFCDVIPPNCIQLRNLILSAFPRNMRLPDPFTPNLKVDMLSEINIAPRILTNFTGVMPPQFKKDLDSYLKTRSPVTFLSELRSNLQVSNEPGNRYNIQLINALVLYVGTQAIAHIHNKGSTPSMSTITHSAHMDIFQNLAVDLDTEGRYLFLNAIANQLRYPNSHTHYFSCTMLYLFAEANTEAIQEQITRVLLERLIVNRPHPWGLLITFIELIKNPAFKFWNHEFVHCAPEIEKLFQSVAQCCMGQKQAQQVMEGTGAS</sequence>